<gene>
    <name type="ordered locus">At4g34480</name>
    <name type="ORF">T4L20.60</name>
</gene>
<name>E137_ARATH</name>
<comment type="catalytic activity">
    <reaction>
        <text>Hydrolysis of (1-&gt;3)-beta-D-glucosidic linkages in (1-&gt;3)-beta-D-glucans.</text>
        <dbReference type="EC" id="3.2.1.39"/>
    </reaction>
</comment>
<comment type="subcellular location">
    <subcellularLocation>
        <location evidence="5">Secreted</location>
    </subcellularLocation>
    <subcellularLocation>
        <location evidence="5">Secreted</location>
        <location evidence="5">Cell wall</location>
    </subcellularLocation>
</comment>
<comment type="PTM">
    <text evidence="1">Contains two additional disulfide bonds.</text>
</comment>
<comment type="similarity">
    <text evidence="3">Belongs to the glycosyl hydrolase 17 family.</text>
</comment>
<comment type="sequence caution" evidence="6">
    <conflict type="erroneous gene model prediction">
        <sequence resource="EMBL-CDS" id="CAA18827"/>
    </conflict>
</comment>
<comment type="sequence caution" evidence="6">
    <conflict type="erroneous gene model prediction">
        <sequence resource="EMBL-CDS" id="CAB80165"/>
    </conflict>
</comment>
<evidence type="ECO:0000250" key="1"/>
<evidence type="ECO:0000250" key="2">
    <source>
        <dbReference type="UniProtKB" id="O22317"/>
    </source>
</evidence>
<evidence type="ECO:0000255" key="3"/>
<evidence type="ECO:0000269" key="4">
    <source>
    </source>
</evidence>
<evidence type="ECO:0000269" key="5">
    <source>
    </source>
</evidence>
<evidence type="ECO:0000305" key="6"/>
<evidence type="ECO:0000312" key="7">
    <source>
        <dbReference type="EMBL" id="CAB80165.1"/>
    </source>
</evidence>
<feature type="signal peptide" evidence="5">
    <location>
        <begin position="1"/>
        <end position="22"/>
    </location>
</feature>
<feature type="chain" id="PRO_0000042684" description="Glucan endo-1,3-beta-glucosidase 7">
    <location>
        <begin position="23"/>
        <end position="504"/>
    </location>
</feature>
<feature type="active site" description="Proton donor" evidence="2">
    <location>
        <position position="119"/>
    </location>
</feature>
<feature type="active site" description="Nucleophile" evidence="2">
    <location>
        <position position="264"/>
    </location>
</feature>
<feature type="disulfide bond" evidence="1">
    <location>
        <begin position="365"/>
        <end position="427"/>
    </location>
</feature>
<organism>
    <name type="scientific">Arabidopsis thaliana</name>
    <name type="common">Mouse-ear cress</name>
    <dbReference type="NCBI Taxonomy" id="3702"/>
    <lineage>
        <taxon>Eukaryota</taxon>
        <taxon>Viridiplantae</taxon>
        <taxon>Streptophyta</taxon>
        <taxon>Embryophyta</taxon>
        <taxon>Tracheophyta</taxon>
        <taxon>Spermatophyta</taxon>
        <taxon>Magnoliopsida</taxon>
        <taxon>eudicotyledons</taxon>
        <taxon>Gunneridae</taxon>
        <taxon>Pentapetalae</taxon>
        <taxon>rosids</taxon>
        <taxon>malvids</taxon>
        <taxon>Brassicales</taxon>
        <taxon>Brassicaceae</taxon>
        <taxon>Camelineae</taxon>
        <taxon>Arabidopsis</taxon>
    </lineage>
</organism>
<keyword id="KW-0134">Cell wall</keyword>
<keyword id="KW-0961">Cell wall biogenesis/degradation</keyword>
<keyword id="KW-0903">Direct protein sequencing</keyword>
<keyword id="KW-1015">Disulfide bond</keyword>
<keyword id="KW-0326">Glycosidase</keyword>
<keyword id="KW-0378">Hydrolase</keyword>
<keyword id="KW-1185">Reference proteome</keyword>
<keyword id="KW-0964">Secreted</keyword>
<keyword id="KW-0732">Signal</keyword>
<reference evidence="6 7" key="1">
    <citation type="journal article" date="1999" name="Nature">
        <title>Sequence and analysis of chromosome 4 of the plant Arabidopsis thaliana.</title>
        <authorList>
            <person name="Mayer K.F.X."/>
            <person name="Schueller C."/>
            <person name="Wambutt R."/>
            <person name="Murphy G."/>
            <person name="Volckaert G."/>
            <person name="Pohl T."/>
            <person name="Duesterhoeft A."/>
            <person name="Stiekema W."/>
            <person name="Entian K.-D."/>
            <person name="Terryn N."/>
            <person name="Harris B."/>
            <person name="Ansorge W."/>
            <person name="Brandt P."/>
            <person name="Grivell L.A."/>
            <person name="Rieger M."/>
            <person name="Weichselgartner M."/>
            <person name="de Simone V."/>
            <person name="Obermaier B."/>
            <person name="Mache R."/>
            <person name="Mueller M."/>
            <person name="Kreis M."/>
            <person name="Delseny M."/>
            <person name="Puigdomenech P."/>
            <person name="Watson M."/>
            <person name="Schmidtheini T."/>
            <person name="Reichert B."/>
            <person name="Portetelle D."/>
            <person name="Perez-Alonso M."/>
            <person name="Boutry M."/>
            <person name="Bancroft I."/>
            <person name="Vos P."/>
            <person name="Hoheisel J."/>
            <person name="Zimmermann W."/>
            <person name="Wedler H."/>
            <person name="Ridley P."/>
            <person name="Langham S.-A."/>
            <person name="McCullagh B."/>
            <person name="Bilham L."/>
            <person name="Robben J."/>
            <person name="van der Schueren J."/>
            <person name="Grymonprez B."/>
            <person name="Chuang Y.-J."/>
            <person name="Vandenbussche F."/>
            <person name="Braeken M."/>
            <person name="Weltjens I."/>
            <person name="Voet M."/>
            <person name="Bastiaens I."/>
            <person name="Aert R."/>
            <person name="Defoor E."/>
            <person name="Weitzenegger T."/>
            <person name="Bothe G."/>
            <person name="Ramsperger U."/>
            <person name="Hilbert H."/>
            <person name="Braun M."/>
            <person name="Holzer E."/>
            <person name="Brandt A."/>
            <person name="Peters S."/>
            <person name="van Staveren M."/>
            <person name="Dirkse W."/>
            <person name="Mooijman P."/>
            <person name="Klein Lankhorst R."/>
            <person name="Rose M."/>
            <person name="Hauf J."/>
            <person name="Koetter P."/>
            <person name="Berneiser S."/>
            <person name="Hempel S."/>
            <person name="Feldpausch M."/>
            <person name="Lamberth S."/>
            <person name="Van den Daele H."/>
            <person name="De Keyser A."/>
            <person name="Buysshaert C."/>
            <person name="Gielen J."/>
            <person name="Villarroel R."/>
            <person name="De Clercq R."/>
            <person name="van Montagu M."/>
            <person name="Rogers J."/>
            <person name="Cronin A."/>
            <person name="Quail M.A."/>
            <person name="Bray-Allen S."/>
            <person name="Clark L."/>
            <person name="Doggett J."/>
            <person name="Hall S."/>
            <person name="Kay M."/>
            <person name="Lennard N."/>
            <person name="McLay K."/>
            <person name="Mayes R."/>
            <person name="Pettett A."/>
            <person name="Rajandream M.A."/>
            <person name="Lyne M."/>
            <person name="Benes V."/>
            <person name="Rechmann S."/>
            <person name="Borkova D."/>
            <person name="Bloecker H."/>
            <person name="Scharfe M."/>
            <person name="Grimm M."/>
            <person name="Loehnert T.-H."/>
            <person name="Dose S."/>
            <person name="de Haan M."/>
            <person name="Maarse A.C."/>
            <person name="Schaefer M."/>
            <person name="Mueller-Auer S."/>
            <person name="Gabel C."/>
            <person name="Fuchs M."/>
            <person name="Fartmann B."/>
            <person name="Granderath K."/>
            <person name="Dauner D."/>
            <person name="Herzl A."/>
            <person name="Neumann S."/>
            <person name="Argiriou A."/>
            <person name="Vitale D."/>
            <person name="Liguori R."/>
            <person name="Piravandi E."/>
            <person name="Massenet O."/>
            <person name="Quigley F."/>
            <person name="Clabauld G."/>
            <person name="Muendlein A."/>
            <person name="Felber R."/>
            <person name="Schnabl S."/>
            <person name="Hiller R."/>
            <person name="Schmidt W."/>
            <person name="Lecharny A."/>
            <person name="Aubourg S."/>
            <person name="Chefdor F."/>
            <person name="Cooke R."/>
            <person name="Berger C."/>
            <person name="Monfort A."/>
            <person name="Casacuberta E."/>
            <person name="Gibbons T."/>
            <person name="Weber N."/>
            <person name="Vandenbol M."/>
            <person name="Bargues M."/>
            <person name="Terol J."/>
            <person name="Torres A."/>
            <person name="Perez-Perez A."/>
            <person name="Purnelle B."/>
            <person name="Bent E."/>
            <person name="Johnson S."/>
            <person name="Tacon D."/>
            <person name="Jesse T."/>
            <person name="Heijnen L."/>
            <person name="Schwarz S."/>
            <person name="Scholler P."/>
            <person name="Heber S."/>
            <person name="Francs P."/>
            <person name="Bielke C."/>
            <person name="Frishman D."/>
            <person name="Haase D."/>
            <person name="Lemcke K."/>
            <person name="Mewes H.-W."/>
            <person name="Stocker S."/>
            <person name="Zaccaria P."/>
            <person name="Bevan M."/>
            <person name="Wilson R.K."/>
            <person name="de la Bastide M."/>
            <person name="Habermann K."/>
            <person name="Parnell L."/>
            <person name="Dedhia N."/>
            <person name="Gnoj L."/>
            <person name="Schutz K."/>
            <person name="Huang E."/>
            <person name="Spiegel L."/>
            <person name="Sekhon M."/>
            <person name="Murray J."/>
            <person name="Sheet P."/>
            <person name="Cordes M."/>
            <person name="Abu-Threideh J."/>
            <person name="Stoneking T."/>
            <person name="Kalicki J."/>
            <person name="Graves T."/>
            <person name="Harmon G."/>
            <person name="Edwards J."/>
            <person name="Latreille P."/>
            <person name="Courtney L."/>
            <person name="Cloud J."/>
            <person name="Abbott A."/>
            <person name="Scott K."/>
            <person name="Johnson D."/>
            <person name="Minx P."/>
            <person name="Bentley D."/>
            <person name="Fulton B."/>
            <person name="Miller N."/>
            <person name="Greco T."/>
            <person name="Kemp K."/>
            <person name="Kramer J."/>
            <person name="Fulton L."/>
            <person name="Mardis E."/>
            <person name="Dante M."/>
            <person name="Pepin K."/>
            <person name="Hillier L.W."/>
            <person name="Nelson J."/>
            <person name="Spieth J."/>
            <person name="Ryan E."/>
            <person name="Andrews S."/>
            <person name="Geisel C."/>
            <person name="Layman D."/>
            <person name="Du H."/>
            <person name="Ali J."/>
            <person name="Berghoff A."/>
            <person name="Jones K."/>
            <person name="Drone K."/>
            <person name="Cotton M."/>
            <person name="Joshu C."/>
            <person name="Antonoiu B."/>
            <person name="Zidanic M."/>
            <person name="Strong C."/>
            <person name="Sun H."/>
            <person name="Lamar B."/>
            <person name="Yordan C."/>
            <person name="Ma P."/>
            <person name="Zhong J."/>
            <person name="Preston R."/>
            <person name="Vil D."/>
            <person name="Shekher M."/>
            <person name="Matero A."/>
            <person name="Shah R."/>
            <person name="Swaby I.K."/>
            <person name="O'Shaughnessy A."/>
            <person name="Rodriguez M."/>
            <person name="Hoffman J."/>
            <person name="Till S."/>
            <person name="Granat S."/>
            <person name="Shohdy N."/>
            <person name="Hasegawa A."/>
            <person name="Hameed A."/>
            <person name="Lodhi M."/>
            <person name="Johnson A."/>
            <person name="Chen E."/>
            <person name="Marra M.A."/>
            <person name="Martienssen R."/>
            <person name="McCombie W.R."/>
        </authorList>
    </citation>
    <scope>NUCLEOTIDE SEQUENCE [LARGE SCALE GENOMIC DNA]</scope>
    <source>
        <strain evidence="4">cv. Columbia</strain>
    </source>
</reference>
<reference key="2">
    <citation type="journal article" date="2017" name="Plant J.">
        <title>Araport11: a complete reannotation of the Arabidopsis thaliana reference genome.</title>
        <authorList>
            <person name="Cheng C.Y."/>
            <person name="Krishnakumar V."/>
            <person name="Chan A.P."/>
            <person name="Thibaud-Nissen F."/>
            <person name="Schobel S."/>
            <person name="Town C.D."/>
        </authorList>
    </citation>
    <scope>GENOME REANNOTATION</scope>
    <source>
        <strain>cv. Columbia</strain>
    </source>
</reference>
<reference evidence="6" key="3">
    <citation type="journal article" date="1997" name="J. Biol. Chem.">
        <title>Differential extraction and protein sequencing reveals major differences in patterns of primary cell wall proteins from plants.</title>
        <authorList>
            <person name="Robertson D."/>
            <person name="Mitchell G.P."/>
            <person name="Gilroy J.S."/>
            <person name="Gerrish C."/>
            <person name="Bolwell G.P."/>
            <person name="Slabas A.R."/>
        </authorList>
    </citation>
    <scope>PROTEIN SEQUENCE OF 23-38</scope>
    <scope>SUBCELLULAR LOCATION</scope>
    <source>
        <strain>cv. Landsberg erecta</strain>
    </source>
</reference>
<dbReference type="EC" id="3.2.1.39"/>
<dbReference type="EMBL" id="AL023094">
    <property type="protein sequence ID" value="CAA18827.1"/>
    <property type="status" value="ALT_SEQ"/>
    <property type="molecule type" value="Genomic_DNA"/>
</dbReference>
<dbReference type="EMBL" id="AL161585">
    <property type="protein sequence ID" value="CAB80165.1"/>
    <property type="status" value="ALT_SEQ"/>
    <property type="molecule type" value="Genomic_DNA"/>
</dbReference>
<dbReference type="EMBL" id="CP002687">
    <property type="protein sequence ID" value="AEE86384.1"/>
    <property type="molecule type" value="Genomic_DNA"/>
</dbReference>
<dbReference type="PIR" id="D85406">
    <property type="entry name" value="D85406"/>
</dbReference>
<dbReference type="PIR" id="T05268">
    <property type="entry name" value="T05268"/>
</dbReference>
<dbReference type="RefSeq" id="NP_001328502.1">
    <property type="nucleotide sequence ID" value="NM_001342285.1"/>
</dbReference>
<dbReference type="RefSeq" id="NP_195174.6">
    <property type="nucleotide sequence ID" value="NM_119613.8"/>
</dbReference>
<dbReference type="SMR" id="Q9M069"/>
<dbReference type="FunCoup" id="Q9M069">
    <property type="interactions" value="121"/>
</dbReference>
<dbReference type="STRING" id="3702.Q9M069"/>
<dbReference type="CAZy" id="GH17">
    <property type="family name" value="Glycoside Hydrolase Family 17"/>
</dbReference>
<dbReference type="PaxDb" id="3702-AT4G34480.1"/>
<dbReference type="ProteomicsDB" id="222008"/>
<dbReference type="EnsemblPlants" id="AT4G34480.1">
    <property type="protein sequence ID" value="AT4G34480.1"/>
    <property type="gene ID" value="AT4G34480"/>
</dbReference>
<dbReference type="GeneID" id="829599"/>
<dbReference type="Gramene" id="AT4G34480.1">
    <property type="protein sequence ID" value="AT4G34480.1"/>
    <property type="gene ID" value="AT4G34480"/>
</dbReference>
<dbReference type="KEGG" id="ath:AT4G34480"/>
<dbReference type="Araport" id="AT4G34480"/>
<dbReference type="TAIR" id="AT4G34480"/>
<dbReference type="eggNOG" id="ENOG502QQY7">
    <property type="taxonomic scope" value="Eukaryota"/>
</dbReference>
<dbReference type="HOGENOM" id="CLU_024953_1_0_1"/>
<dbReference type="InParanoid" id="Q9M069"/>
<dbReference type="OMA" id="MRRIPMA"/>
<dbReference type="PhylomeDB" id="Q9M069"/>
<dbReference type="BioCyc" id="ARA:AT4G34480-MONOMER"/>
<dbReference type="PRO" id="PR:Q9M069"/>
<dbReference type="Proteomes" id="UP000006548">
    <property type="component" value="Chromosome 4"/>
</dbReference>
<dbReference type="ExpressionAtlas" id="Q9M069">
    <property type="expression patterns" value="baseline and differential"/>
</dbReference>
<dbReference type="GO" id="GO:0005576">
    <property type="term" value="C:extracellular region"/>
    <property type="evidence" value="ECO:0007669"/>
    <property type="project" value="UniProtKB-SubCell"/>
</dbReference>
<dbReference type="GO" id="GO:0042973">
    <property type="term" value="F:glucan endo-1,3-beta-D-glucosidase activity"/>
    <property type="evidence" value="ECO:0007669"/>
    <property type="project" value="UniProtKB-EC"/>
</dbReference>
<dbReference type="GO" id="GO:0005975">
    <property type="term" value="P:carbohydrate metabolic process"/>
    <property type="evidence" value="ECO:0007669"/>
    <property type="project" value="InterPro"/>
</dbReference>
<dbReference type="GO" id="GO:0071555">
    <property type="term" value="P:cell wall organization"/>
    <property type="evidence" value="ECO:0007669"/>
    <property type="project" value="UniProtKB-KW"/>
</dbReference>
<dbReference type="FunFam" id="3.20.20.80:FF:000005">
    <property type="entry name" value="Glucan endo-1,3-beta-glucosidase 14"/>
    <property type="match status" value="1"/>
</dbReference>
<dbReference type="FunFam" id="1.20.58.1040:FF:000003">
    <property type="entry name" value="glucan endo-1,3-beta-glucosidase 7"/>
    <property type="match status" value="1"/>
</dbReference>
<dbReference type="Gene3D" id="1.20.58.1040">
    <property type="match status" value="1"/>
</dbReference>
<dbReference type="Gene3D" id="3.20.20.80">
    <property type="entry name" value="Glycosidases"/>
    <property type="match status" value="1"/>
</dbReference>
<dbReference type="InterPro" id="IPR000490">
    <property type="entry name" value="Glyco_hydro_17"/>
</dbReference>
<dbReference type="InterPro" id="IPR044965">
    <property type="entry name" value="Glyco_hydro_17_plant"/>
</dbReference>
<dbReference type="InterPro" id="IPR017853">
    <property type="entry name" value="Glycoside_hydrolase_SF"/>
</dbReference>
<dbReference type="InterPro" id="IPR012946">
    <property type="entry name" value="X8"/>
</dbReference>
<dbReference type="PANTHER" id="PTHR32227">
    <property type="entry name" value="GLUCAN ENDO-1,3-BETA-GLUCOSIDASE BG1-RELATED-RELATED"/>
    <property type="match status" value="1"/>
</dbReference>
<dbReference type="Pfam" id="PF00332">
    <property type="entry name" value="Glyco_hydro_17"/>
    <property type="match status" value="1"/>
</dbReference>
<dbReference type="Pfam" id="PF07983">
    <property type="entry name" value="X8"/>
    <property type="match status" value="1"/>
</dbReference>
<dbReference type="SMART" id="SM00768">
    <property type="entry name" value="X8"/>
    <property type="match status" value="1"/>
</dbReference>
<dbReference type="SUPFAM" id="SSF51445">
    <property type="entry name" value="(Trans)glycosidases"/>
    <property type="match status" value="1"/>
</dbReference>
<proteinExistence type="evidence at protein level"/>
<protein>
    <recommendedName>
        <fullName>Glucan endo-1,3-beta-glucosidase 7</fullName>
        <ecNumber>3.2.1.39</ecNumber>
    </recommendedName>
    <alternativeName>
        <fullName>(1-&gt;3)-beta-glucan endohydrolase 7</fullName>
        <shortName>(1-&gt;3)-beta-glucanase 7</shortName>
    </alternativeName>
    <alternativeName>
        <fullName>Beta-1,3-endoglucanase 7</fullName>
        <shortName>Beta-1,3-glucanase 7</shortName>
    </alternativeName>
</protein>
<sequence length="504" mass="53121">MALSISIYFLLIFLSHFPSSHAEPFIGVNYGQVADNLPPPSETVKLLQSTSIQKVRLYGADPAIIKALAGTGVGIVIGAANGDVPSLASDPNAATQWINSNVLPFYPASKIMLITVGNEILMSNDPNLVNQLLPAMQNVQKALEAVSLGGKIKVSTVNSMTVLGSSDPPSSGSFAAGYQTGLKGILQFLSDTGSPFAINPYPFFAYQSDPRPETLAFCLFEPNAGRVDSKTGIKYTNMFDAQVDAVHSALKSMGFEKVEIVVAETGWASRGDANEVGASVDNAKAYNGNLIAHLRSMVGTPLMPGKPVDTYIFALYDENLKPGPSSERAFGLFKTDLSMVYDVGLAKSSSSSQTPSGKVTSSGWCVPKKGATNEELQASLDWACGHGIDCGAIQPGGACFEPNNVVSHAAYAMNMYFQKSPKQPTDCDFSKTATVTSQNPSYNNCVYPGGGGGGGGGGGGSKAVMNKYVSSDKVEKKNGATEPKVSSSLSFLLIFLSLIFHVYM</sequence>
<accession>Q9M069</accession>
<accession>O65675</accession>
<accession>P80829</accession>